<name>KHSE_PYRHO</name>
<organism>
    <name type="scientific">Pyrococcus horikoshii (strain ATCC 700860 / DSM 12428 / JCM 9974 / NBRC 100139 / OT-3)</name>
    <dbReference type="NCBI Taxonomy" id="70601"/>
    <lineage>
        <taxon>Archaea</taxon>
        <taxon>Methanobacteriati</taxon>
        <taxon>Methanobacteriota</taxon>
        <taxon>Thermococci</taxon>
        <taxon>Thermococcales</taxon>
        <taxon>Thermococcaceae</taxon>
        <taxon>Pyrococcus</taxon>
    </lineage>
</organism>
<comment type="function">
    <text evidence="1">Catalyzes the ATP-dependent phosphorylation of L-homoserine to L-homoserine phosphate.</text>
</comment>
<comment type="catalytic activity">
    <reaction evidence="1">
        <text>L-homoserine + ATP = O-phospho-L-homoserine + ADP + H(+)</text>
        <dbReference type="Rhea" id="RHEA:13985"/>
        <dbReference type="ChEBI" id="CHEBI:15378"/>
        <dbReference type="ChEBI" id="CHEBI:30616"/>
        <dbReference type="ChEBI" id="CHEBI:57476"/>
        <dbReference type="ChEBI" id="CHEBI:57590"/>
        <dbReference type="ChEBI" id="CHEBI:456216"/>
        <dbReference type="EC" id="2.7.1.39"/>
    </reaction>
</comment>
<comment type="pathway">
    <text evidence="1">Amino-acid biosynthesis; L-threonine biosynthesis; L-threonine from L-aspartate: step 4/5.</text>
</comment>
<comment type="subcellular location">
    <subcellularLocation>
        <location evidence="1">Cytoplasm</location>
    </subcellularLocation>
</comment>
<comment type="similarity">
    <text evidence="1">Belongs to the GHMP kinase family. Homoserine kinase subfamily.</text>
</comment>
<comment type="sequence caution" evidence="2">
    <conflict type="erroneous initiation">
        <sequence resource="EMBL-CDS" id="BAA30186"/>
    </conflict>
</comment>
<reference key="1">
    <citation type="journal article" date="1998" name="DNA Res.">
        <title>Complete sequence and gene organization of the genome of a hyper-thermophilic archaebacterium, Pyrococcus horikoshii OT3.</title>
        <authorList>
            <person name="Kawarabayasi Y."/>
            <person name="Sawada M."/>
            <person name="Horikawa H."/>
            <person name="Haikawa Y."/>
            <person name="Hino Y."/>
            <person name="Yamamoto S."/>
            <person name="Sekine M."/>
            <person name="Baba S."/>
            <person name="Kosugi H."/>
            <person name="Hosoyama A."/>
            <person name="Nagai Y."/>
            <person name="Sakai M."/>
            <person name="Ogura K."/>
            <person name="Otsuka R."/>
            <person name="Nakazawa H."/>
            <person name="Takamiya M."/>
            <person name="Ohfuku Y."/>
            <person name="Funahashi T."/>
            <person name="Tanaka T."/>
            <person name="Kudoh Y."/>
            <person name="Yamazaki J."/>
            <person name="Kushida N."/>
            <person name="Oguchi A."/>
            <person name="Aoki K."/>
            <person name="Yoshizawa T."/>
            <person name="Nakamura Y."/>
            <person name="Robb F.T."/>
            <person name="Horikoshi K."/>
            <person name="Masuchi Y."/>
            <person name="Shizuya H."/>
            <person name="Kikuchi H."/>
        </authorList>
    </citation>
    <scope>NUCLEOTIDE SEQUENCE [LARGE SCALE GENOMIC DNA]</scope>
    <source>
        <strain>ATCC 700860 / DSM 12428 / JCM 9974 / NBRC 100139 / OT-3</strain>
    </source>
</reference>
<evidence type="ECO:0000255" key="1">
    <source>
        <dbReference type="HAMAP-Rule" id="MF_00384"/>
    </source>
</evidence>
<evidence type="ECO:0000305" key="2"/>
<gene>
    <name evidence="1" type="primary">thrB</name>
    <name type="ordered locus">PH1087</name>
</gene>
<dbReference type="EC" id="2.7.1.39" evidence="1"/>
<dbReference type="EMBL" id="BA000001">
    <property type="protein sequence ID" value="BAA30186.1"/>
    <property type="status" value="ALT_INIT"/>
    <property type="molecule type" value="Genomic_DNA"/>
</dbReference>
<dbReference type="PIR" id="D71103">
    <property type="entry name" value="D71103"/>
</dbReference>
<dbReference type="SMR" id="O58814"/>
<dbReference type="STRING" id="70601.gene:9378046"/>
<dbReference type="EnsemblBacteria" id="BAA30186">
    <property type="protein sequence ID" value="BAA30186"/>
    <property type="gene ID" value="BAA30186"/>
</dbReference>
<dbReference type="KEGG" id="pho:PH1087"/>
<dbReference type="eggNOG" id="arCOG01027">
    <property type="taxonomic scope" value="Archaea"/>
</dbReference>
<dbReference type="OrthoDB" id="28273at2157"/>
<dbReference type="UniPathway" id="UPA00050">
    <property type="reaction ID" value="UER00064"/>
</dbReference>
<dbReference type="Proteomes" id="UP000000752">
    <property type="component" value="Chromosome"/>
</dbReference>
<dbReference type="GO" id="GO:0005737">
    <property type="term" value="C:cytoplasm"/>
    <property type="evidence" value="ECO:0007669"/>
    <property type="project" value="UniProtKB-SubCell"/>
</dbReference>
<dbReference type="GO" id="GO:0005524">
    <property type="term" value="F:ATP binding"/>
    <property type="evidence" value="ECO:0007669"/>
    <property type="project" value="UniProtKB-UniRule"/>
</dbReference>
<dbReference type="GO" id="GO:0004413">
    <property type="term" value="F:homoserine kinase activity"/>
    <property type="evidence" value="ECO:0007669"/>
    <property type="project" value="UniProtKB-UniRule"/>
</dbReference>
<dbReference type="GO" id="GO:0009088">
    <property type="term" value="P:threonine biosynthetic process"/>
    <property type="evidence" value="ECO:0007669"/>
    <property type="project" value="UniProtKB-UniRule"/>
</dbReference>
<dbReference type="Gene3D" id="3.30.230.10">
    <property type="match status" value="1"/>
</dbReference>
<dbReference type="Gene3D" id="3.30.70.890">
    <property type="entry name" value="GHMP kinase, C-terminal domain"/>
    <property type="match status" value="1"/>
</dbReference>
<dbReference type="HAMAP" id="MF_00384">
    <property type="entry name" value="Homoser_kinase"/>
    <property type="match status" value="1"/>
</dbReference>
<dbReference type="InterPro" id="IPR013750">
    <property type="entry name" value="GHMP_kinase_C_dom"/>
</dbReference>
<dbReference type="InterPro" id="IPR036554">
    <property type="entry name" value="GHMP_kinase_C_sf"/>
</dbReference>
<dbReference type="InterPro" id="IPR006204">
    <property type="entry name" value="GHMP_kinase_N_dom"/>
</dbReference>
<dbReference type="InterPro" id="IPR000870">
    <property type="entry name" value="Homoserine_kinase"/>
</dbReference>
<dbReference type="InterPro" id="IPR020568">
    <property type="entry name" value="Ribosomal_Su5_D2-typ_SF"/>
</dbReference>
<dbReference type="InterPro" id="IPR014721">
    <property type="entry name" value="Ribsml_uS5_D2-typ_fold_subgr"/>
</dbReference>
<dbReference type="NCBIfam" id="NF002288">
    <property type="entry name" value="PRK01212.1-4"/>
    <property type="match status" value="1"/>
</dbReference>
<dbReference type="NCBIfam" id="TIGR00191">
    <property type="entry name" value="thrB"/>
    <property type="match status" value="1"/>
</dbReference>
<dbReference type="PANTHER" id="PTHR20861:SF1">
    <property type="entry name" value="HOMOSERINE KINASE"/>
    <property type="match status" value="1"/>
</dbReference>
<dbReference type="PANTHER" id="PTHR20861">
    <property type="entry name" value="HOMOSERINE/4-DIPHOSPHOCYTIDYL-2-C-METHYL-D-ERYTHRITOL KINASE"/>
    <property type="match status" value="1"/>
</dbReference>
<dbReference type="Pfam" id="PF08544">
    <property type="entry name" value="GHMP_kinases_C"/>
    <property type="match status" value="1"/>
</dbReference>
<dbReference type="Pfam" id="PF00288">
    <property type="entry name" value="GHMP_kinases_N"/>
    <property type="match status" value="1"/>
</dbReference>
<dbReference type="PIRSF" id="PIRSF000676">
    <property type="entry name" value="Homoser_kin"/>
    <property type="match status" value="1"/>
</dbReference>
<dbReference type="PRINTS" id="PR00958">
    <property type="entry name" value="HOMSERKINASE"/>
</dbReference>
<dbReference type="SUPFAM" id="SSF55060">
    <property type="entry name" value="GHMP Kinase, C-terminal domain"/>
    <property type="match status" value="1"/>
</dbReference>
<dbReference type="SUPFAM" id="SSF54211">
    <property type="entry name" value="Ribosomal protein S5 domain 2-like"/>
    <property type="match status" value="1"/>
</dbReference>
<proteinExistence type="inferred from homology"/>
<accession>O58814</accession>
<keyword id="KW-0028">Amino-acid biosynthesis</keyword>
<keyword id="KW-0067">ATP-binding</keyword>
<keyword id="KW-0963">Cytoplasm</keyword>
<keyword id="KW-0418">Kinase</keyword>
<keyword id="KW-0547">Nucleotide-binding</keyword>
<keyword id="KW-0791">Threonine biosynthesis</keyword>
<keyword id="KW-0808">Transferase</keyword>
<sequence length="293" mass="31485">MRIKVRAPATIANFGPGFDVFGMAIDKPFDEVVVEEFNEFEIISSGYPVPNGEDNIALFSAKTLFKMLNIEGGLRIKLKKGIRPKSGLGSSGASAVAGALGAAKLLGVSNDELILKAAMKGEEKASGEPHPDNVVPSYYGGFTVIESKSPLRVHFVDAKLRGVVVLPEVEIPTAKARKILPSMVPLKDAVKNIAMASSLILALKEGDLETIGRLLDDNLALPYRKKLMPWFDEIRRVALETGAYGITVSGSGPALFAIGENLKDIGKTIVEKFEELGIKAEYWVTKTGRGAKT</sequence>
<protein>
    <recommendedName>
        <fullName evidence="1">Homoserine kinase</fullName>
        <shortName evidence="1">HK</shortName>
        <shortName evidence="1">HSK</shortName>
        <ecNumber evidence="1">2.7.1.39</ecNumber>
    </recommendedName>
</protein>
<feature type="chain" id="PRO_0000156647" description="Homoserine kinase">
    <location>
        <begin position="1"/>
        <end position="293"/>
    </location>
</feature>
<feature type="binding site" evidence="1">
    <location>
        <begin position="83"/>
        <end position="93"/>
    </location>
    <ligand>
        <name>ATP</name>
        <dbReference type="ChEBI" id="CHEBI:30616"/>
    </ligand>
</feature>